<feature type="chain" id="PRO_0000168951" description="Uncharacterized protein YdfA">
    <location>
        <begin position="1"/>
        <end position="51"/>
    </location>
</feature>
<name>YDFA_ECOLI</name>
<keyword id="KW-1185">Reference proteome</keyword>
<reference key="1">
    <citation type="journal article" date="1988" name="Nucleic Acids Res.">
        <title>Identification and sequence of gene dicB: translation of the division inhibitor from an in-phase internal start.</title>
        <authorList>
            <person name="Cam K."/>
            <person name="Bejar S."/>
            <person name="Gil D."/>
            <person name="Bouche J.-P."/>
        </authorList>
    </citation>
    <scope>NUCLEOTIDE SEQUENCE [GENOMIC DNA]</scope>
</reference>
<reference key="2">
    <citation type="journal article" date="1996" name="DNA Res.">
        <title>A 570-kb DNA sequence of the Escherichia coli K-12 genome corresponding to the 28.0-40.1 min region on the linkage map.</title>
        <authorList>
            <person name="Aiba H."/>
            <person name="Baba T."/>
            <person name="Fujita K."/>
            <person name="Hayashi K."/>
            <person name="Inada T."/>
            <person name="Isono K."/>
            <person name="Itoh T."/>
            <person name="Kasai H."/>
            <person name="Kashimoto K."/>
            <person name="Kimura S."/>
            <person name="Kitakawa M."/>
            <person name="Kitagawa M."/>
            <person name="Makino K."/>
            <person name="Miki T."/>
            <person name="Mizobuchi K."/>
            <person name="Mori H."/>
            <person name="Mori T."/>
            <person name="Motomura K."/>
            <person name="Nakade S."/>
            <person name="Nakamura Y."/>
            <person name="Nashimoto H."/>
            <person name="Nishio Y."/>
            <person name="Oshima T."/>
            <person name="Saito N."/>
            <person name="Sampei G."/>
            <person name="Seki Y."/>
            <person name="Sivasundaram S."/>
            <person name="Tagami H."/>
            <person name="Takeda J."/>
            <person name="Takemoto K."/>
            <person name="Takeuchi Y."/>
            <person name="Wada C."/>
            <person name="Yamamoto Y."/>
            <person name="Horiuchi T."/>
        </authorList>
    </citation>
    <scope>NUCLEOTIDE SEQUENCE [LARGE SCALE GENOMIC DNA]</scope>
    <source>
        <strain>K12 / W3110 / ATCC 27325 / DSM 5911</strain>
    </source>
</reference>
<reference key="3">
    <citation type="journal article" date="1997" name="Science">
        <title>The complete genome sequence of Escherichia coli K-12.</title>
        <authorList>
            <person name="Blattner F.R."/>
            <person name="Plunkett G. III"/>
            <person name="Bloch C.A."/>
            <person name="Perna N.T."/>
            <person name="Burland V."/>
            <person name="Riley M."/>
            <person name="Collado-Vides J."/>
            <person name="Glasner J.D."/>
            <person name="Rode C.K."/>
            <person name="Mayhew G.F."/>
            <person name="Gregor J."/>
            <person name="Davis N.W."/>
            <person name="Kirkpatrick H.A."/>
            <person name="Goeden M.A."/>
            <person name="Rose D.J."/>
            <person name="Mau B."/>
            <person name="Shao Y."/>
        </authorList>
    </citation>
    <scope>NUCLEOTIDE SEQUENCE [LARGE SCALE GENOMIC DNA]</scope>
    <source>
        <strain>K12 / MG1655 / ATCC 47076</strain>
    </source>
</reference>
<reference key="4">
    <citation type="journal article" date="2006" name="Mol. Syst. Biol.">
        <title>Highly accurate genome sequences of Escherichia coli K-12 strains MG1655 and W3110.</title>
        <authorList>
            <person name="Hayashi K."/>
            <person name="Morooka N."/>
            <person name="Yamamoto Y."/>
            <person name="Fujita K."/>
            <person name="Isono K."/>
            <person name="Choi S."/>
            <person name="Ohtsubo E."/>
            <person name="Baba T."/>
            <person name="Wanner B.L."/>
            <person name="Mori H."/>
            <person name="Horiuchi T."/>
        </authorList>
    </citation>
    <scope>NUCLEOTIDE SEQUENCE [LARGE SCALE GENOMIC DNA]</scope>
    <source>
        <strain>K12 / W3110 / ATCC 27325 / DSM 5911</strain>
    </source>
</reference>
<evidence type="ECO:0000305" key="1"/>
<comment type="similarity">
    <text evidence="1">To E.coli YdaF.</text>
</comment>
<gene>
    <name type="primary">ydfA</name>
    <name type="ordered locus">b1571</name>
    <name type="ordered locus">JW1563</name>
</gene>
<proteinExistence type="predicted"/>
<dbReference type="EMBL" id="X07465">
    <property type="status" value="NOT_ANNOTATED_CDS"/>
    <property type="molecule type" value="Genomic_DNA"/>
</dbReference>
<dbReference type="EMBL" id="U00096">
    <property type="protein sequence ID" value="AAC74644.1"/>
    <property type="molecule type" value="Genomic_DNA"/>
</dbReference>
<dbReference type="EMBL" id="AP009048">
    <property type="protein sequence ID" value="BAA15276.1"/>
    <property type="molecule type" value="Genomic_DNA"/>
</dbReference>
<dbReference type="PIR" id="B30383">
    <property type="entry name" value="B30383"/>
</dbReference>
<dbReference type="RefSeq" id="NP_416089.1">
    <property type="nucleotide sequence ID" value="NC_000913.3"/>
</dbReference>
<dbReference type="RefSeq" id="WP_000379575.1">
    <property type="nucleotide sequence ID" value="NZ_SSUV01000001.1"/>
</dbReference>
<dbReference type="BioGRID" id="4261376">
    <property type="interactions" value="16"/>
</dbReference>
<dbReference type="FunCoup" id="P0ACW8">
    <property type="interactions" value="90"/>
</dbReference>
<dbReference type="STRING" id="511145.b1571"/>
<dbReference type="PaxDb" id="511145-b1571"/>
<dbReference type="EnsemblBacteria" id="AAC74644">
    <property type="protein sequence ID" value="AAC74644"/>
    <property type="gene ID" value="b1571"/>
</dbReference>
<dbReference type="GeneID" id="946082"/>
<dbReference type="KEGG" id="ecj:JW1563"/>
<dbReference type="KEGG" id="eco:b1571"/>
<dbReference type="KEGG" id="ecoc:C3026_09055"/>
<dbReference type="PATRIC" id="fig|511145.12.peg.1641"/>
<dbReference type="EchoBASE" id="EB1277"/>
<dbReference type="eggNOG" id="ENOG50331M0">
    <property type="taxonomic scope" value="Bacteria"/>
</dbReference>
<dbReference type="HOGENOM" id="CLU_191375_1_0_6"/>
<dbReference type="InParanoid" id="P0ACW8"/>
<dbReference type="OMA" id="MFASTHR"/>
<dbReference type="OrthoDB" id="8454411at2"/>
<dbReference type="BioCyc" id="EcoCyc:EG11300-MONOMER"/>
<dbReference type="PRO" id="PR:P0ACW8"/>
<dbReference type="Proteomes" id="UP000000625">
    <property type="component" value="Chromosome"/>
</dbReference>
<dbReference type="InterPro" id="IPR009821">
    <property type="entry name" value="DUF1391"/>
</dbReference>
<dbReference type="Pfam" id="PF07151">
    <property type="entry name" value="DUF1391"/>
    <property type="match status" value="1"/>
</dbReference>
<protein>
    <recommendedName>
        <fullName>Uncharacterized protein YdfA</fullName>
    </recommendedName>
</protein>
<organism>
    <name type="scientific">Escherichia coli (strain K12)</name>
    <dbReference type="NCBI Taxonomy" id="83333"/>
    <lineage>
        <taxon>Bacteria</taxon>
        <taxon>Pseudomonadati</taxon>
        <taxon>Pseudomonadota</taxon>
        <taxon>Gammaproteobacteria</taxon>
        <taxon>Enterobacterales</taxon>
        <taxon>Enterobacteriaceae</taxon>
        <taxon>Escherichia</taxon>
    </lineage>
</organism>
<accession>P0ACW8</accession>
<accession>P29008</accession>
<sequence>MDTIDLGNNESLVYGVFPNQDGTFTAMTYTKSKTFKTENGARRWLERNSGE</sequence>